<accession>P72204</accession>
<sequence>MKKKHSRIGLLASLAIHTALIGGTFAWLHNHKVKKLPSKTLFLWKWWQALLDEPQVAVAPDPITEEVKEIEPEKAEVPPEPKLTPEPTPEPDEFQILRLNPKKEKPKEEKRKERHHHKHKHRHKEKREELQEQEKPKDKPKERPKHHHKHIKALDAGPEIKQGIVAKAIPNAAEGEKVVAGVVGGQKNGSPNSTSTTGSANTGASSGNASELPAYKVALQRALQRKANNSYPQREKMNAENRYSYD</sequence>
<organism>
    <name type="scientific">Mannheimia haemolytica</name>
    <name type="common">Pasteurella haemolytica</name>
    <dbReference type="NCBI Taxonomy" id="75985"/>
    <lineage>
        <taxon>Bacteria</taxon>
        <taxon>Pseudomonadati</taxon>
        <taxon>Pseudomonadota</taxon>
        <taxon>Gammaproteobacteria</taxon>
        <taxon>Pasteurellales</taxon>
        <taxon>Pasteurellaceae</taxon>
        <taxon>Mannheimia</taxon>
    </lineage>
</organism>
<evidence type="ECO:0000250" key="1"/>
<evidence type="ECO:0000255" key="2"/>
<evidence type="ECO:0000256" key="3">
    <source>
        <dbReference type="SAM" id="MobiDB-lite"/>
    </source>
</evidence>
<evidence type="ECO:0000305" key="4"/>
<reference key="1">
    <citation type="submission" date="1996-06" db="EMBL/GenBank/DDBJ databases">
        <authorList>
            <person name="Graham M.R."/>
            <person name="Lo R.Y.C."/>
        </authorList>
    </citation>
    <scope>NUCLEOTIDE SEQUENCE [GENOMIC DNA]</scope>
    <source>
        <strain>Serotype A1 / ATCC 43270 / BCRC 13948</strain>
    </source>
</reference>
<proteinExistence type="inferred from homology"/>
<dbReference type="EMBL" id="U62565">
    <property type="protein sequence ID" value="AAB09530.1"/>
    <property type="molecule type" value="Genomic_DNA"/>
</dbReference>
<dbReference type="SMR" id="P72204"/>
<dbReference type="STRING" id="75985.WC39_03495"/>
<dbReference type="GO" id="GO:0005886">
    <property type="term" value="C:plasma membrane"/>
    <property type="evidence" value="ECO:0007669"/>
    <property type="project" value="UniProtKB-SubCell"/>
</dbReference>
<dbReference type="GO" id="GO:0015031">
    <property type="term" value="P:protein transport"/>
    <property type="evidence" value="ECO:0007669"/>
    <property type="project" value="UniProtKB-KW"/>
</dbReference>
<keyword id="KW-0997">Cell inner membrane</keyword>
<keyword id="KW-1003">Cell membrane</keyword>
<keyword id="KW-0472">Membrane</keyword>
<keyword id="KW-0653">Protein transport</keyword>
<keyword id="KW-0735">Signal-anchor</keyword>
<keyword id="KW-0812">Transmembrane</keyword>
<keyword id="KW-1133">Transmembrane helix</keyword>
<keyword id="KW-0813">Transport</keyword>
<protein>
    <recommendedName>
        <fullName>Protein TonB</fullName>
    </recommendedName>
</protein>
<feature type="chain" id="PRO_0000196205" description="Protein TonB">
    <location>
        <begin position="1"/>
        <end position="246"/>
    </location>
</feature>
<feature type="topological domain" description="Cytoplasmic" evidence="2">
    <location>
        <begin position="1"/>
        <end position="7"/>
    </location>
</feature>
<feature type="transmembrane region" description="Helical; Signal-anchor" evidence="2">
    <location>
        <begin position="8"/>
        <end position="28"/>
    </location>
</feature>
<feature type="topological domain" description="Periplasmic" evidence="2">
    <location>
        <begin position="29"/>
        <end position="246"/>
    </location>
</feature>
<feature type="region of interest" description="Disordered" evidence="3">
    <location>
        <begin position="67"/>
        <end position="158"/>
    </location>
</feature>
<feature type="region of interest" description="Disordered" evidence="3">
    <location>
        <begin position="183"/>
        <end position="209"/>
    </location>
</feature>
<feature type="region of interest" description="Disordered" evidence="3">
    <location>
        <begin position="225"/>
        <end position="246"/>
    </location>
</feature>
<feature type="compositionally biased region" description="Basic and acidic residues" evidence="3">
    <location>
        <begin position="67"/>
        <end position="79"/>
    </location>
</feature>
<feature type="compositionally biased region" description="Basic and acidic residues" evidence="3">
    <location>
        <begin position="101"/>
        <end position="111"/>
    </location>
</feature>
<feature type="compositionally biased region" description="Basic residues" evidence="3">
    <location>
        <begin position="112"/>
        <end position="125"/>
    </location>
</feature>
<feature type="compositionally biased region" description="Basic and acidic residues" evidence="3">
    <location>
        <begin position="126"/>
        <end position="141"/>
    </location>
</feature>
<feature type="compositionally biased region" description="Basic residues" evidence="3">
    <location>
        <begin position="142"/>
        <end position="151"/>
    </location>
</feature>
<feature type="compositionally biased region" description="Low complexity" evidence="3">
    <location>
        <begin position="188"/>
        <end position="209"/>
    </location>
</feature>
<feature type="compositionally biased region" description="Basic and acidic residues" evidence="3">
    <location>
        <begin position="233"/>
        <end position="246"/>
    </location>
</feature>
<name>TONB_MANHA</name>
<comment type="function">
    <text evidence="1">Interacts with outer membrane receptor proteins that carry out high-affinity binding and energy dependent uptake into the periplasmic space of specific substrates. It could act to transduce energy from the cytoplasmic membrane to specific energy-requiring processes in the outer membrane, resulting in the release into the periplasm of ligands bound by these outer membrane proteins (By similarity).</text>
</comment>
<comment type="subcellular location">
    <subcellularLocation>
        <location evidence="1">Cell inner membrane</location>
        <topology evidence="1">Single-pass membrane protein</topology>
        <orientation evidence="1">Periplasmic side</orientation>
    </subcellularLocation>
</comment>
<comment type="similarity">
    <text evidence="4">Belongs to the TonB family.</text>
</comment>
<gene>
    <name type="primary">tonB</name>
</gene>